<gene>
    <name type="primary">RFU1</name>
    <name type="ORF">Kpol_1058p8</name>
</gene>
<keyword id="KW-0967">Endosome</keyword>
<keyword id="KW-0646">Protease inhibitor</keyword>
<keyword id="KW-1185">Reference proteome</keyword>
<keyword id="KW-0789">Thiol protease inhibitor</keyword>
<organism>
    <name type="scientific">Vanderwaltozyma polyspora (strain ATCC 22028 / DSM 70294 / BCRC 21397 / CBS 2163 / NBRC 10782 / NRRL Y-8283 / UCD 57-17)</name>
    <name type="common">Kluyveromyces polysporus</name>
    <dbReference type="NCBI Taxonomy" id="436907"/>
    <lineage>
        <taxon>Eukaryota</taxon>
        <taxon>Fungi</taxon>
        <taxon>Dikarya</taxon>
        <taxon>Ascomycota</taxon>
        <taxon>Saccharomycotina</taxon>
        <taxon>Saccharomycetes</taxon>
        <taxon>Saccharomycetales</taxon>
        <taxon>Saccharomycetaceae</taxon>
        <taxon>Vanderwaltozyma</taxon>
    </lineage>
</organism>
<reference key="1">
    <citation type="journal article" date="2007" name="Proc. Natl. Acad. Sci. U.S.A.">
        <title>Independent sorting-out of thousands of duplicated gene pairs in two yeast species descended from a whole-genome duplication.</title>
        <authorList>
            <person name="Scannell D.R."/>
            <person name="Frank A.C."/>
            <person name="Conant G.C."/>
            <person name="Byrne K.P."/>
            <person name="Woolfit M."/>
            <person name="Wolfe K.H."/>
        </authorList>
    </citation>
    <scope>NUCLEOTIDE SEQUENCE [LARGE SCALE GENOMIC DNA]</scope>
    <source>
        <strain>ATCC 22028 / DSM 70294 / BCRC 21397 / CBS 2163 / NBRC 10782 / NRRL Y-8283 / UCD 57-17</strain>
    </source>
</reference>
<sequence length="197" mass="22865">MFIGMKSSSQLRQEALEYTYNANTPLKIYLKVCVSILDKAQLEFQKGDIFSAYVLYYRYADLIANKLSDHSELALVAERDQTVLHREEYYQLVKLELPAVLKIVEDLQKNIDLDYNKIQLSLSKNIAKQQKKPNHVSEPVLLPKTFNENRFNQSISFFNNMNSNITLENKMHGNNNNNTHQELLYPELPTLSNASYI</sequence>
<accession>A7TJP2</accession>
<proteinExistence type="inferred from homology"/>
<feature type="chain" id="PRO_0000376817" description="Regulator of free ubiquitin chains 1">
    <location>
        <begin position="1"/>
        <end position="197"/>
    </location>
</feature>
<comment type="function">
    <text evidence="1">Inhibitor of the DOA4 deubiquitinase involved in the regulation of protein degradation by the proteasome and maintenance of a normal level of free ubiquitin.</text>
</comment>
<comment type="subcellular location">
    <subcellularLocation>
        <location evidence="1">Endosome</location>
    </subcellularLocation>
</comment>
<comment type="similarity">
    <text evidence="2">Belongs to the RFU1 family.</text>
</comment>
<evidence type="ECO:0000250" key="1"/>
<evidence type="ECO:0000305" key="2"/>
<dbReference type="EMBL" id="DS480403">
    <property type="protein sequence ID" value="EDO17471.1"/>
    <property type="molecule type" value="Genomic_DNA"/>
</dbReference>
<dbReference type="RefSeq" id="XP_001645329.1">
    <property type="nucleotide sequence ID" value="XM_001645279.1"/>
</dbReference>
<dbReference type="SMR" id="A7TJP2"/>
<dbReference type="FunCoup" id="A7TJP2">
    <property type="interactions" value="36"/>
</dbReference>
<dbReference type="STRING" id="436907.A7TJP2"/>
<dbReference type="GeneID" id="5545689"/>
<dbReference type="KEGG" id="vpo:Kpol_1058p8"/>
<dbReference type="eggNOG" id="ENOG502S3ZX">
    <property type="taxonomic scope" value="Eukaryota"/>
</dbReference>
<dbReference type="HOGENOM" id="CLU_1348926_0_0_1"/>
<dbReference type="InParanoid" id="A7TJP2"/>
<dbReference type="OMA" id="KSCHELS"/>
<dbReference type="OrthoDB" id="3640at2759"/>
<dbReference type="PhylomeDB" id="A7TJP2"/>
<dbReference type="Proteomes" id="UP000000267">
    <property type="component" value="Unassembled WGS sequence"/>
</dbReference>
<dbReference type="GO" id="GO:0005768">
    <property type="term" value="C:endosome"/>
    <property type="evidence" value="ECO:0007669"/>
    <property type="project" value="UniProtKB-SubCell"/>
</dbReference>
<dbReference type="GO" id="GO:0004869">
    <property type="term" value="F:cysteine-type endopeptidase inhibitor activity"/>
    <property type="evidence" value="ECO:0007669"/>
    <property type="project" value="UniProtKB-KW"/>
</dbReference>
<dbReference type="GO" id="GO:0010992">
    <property type="term" value="P:ubiquitin recycling"/>
    <property type="evidence" value="ECO:0007669"/>
    <property type="project" value="EnsemblFungi"/>
</dbReference>
<dbReference type="Gene3D" id="1.20.58.80">
    <property type="entry name" value="Phosphotransferase system, lactose/cellobiose-type IIA subunit"/>
    <property type="match status" value="1"/>
</dbReference>
<dbReference type="InterPro" id="IPR015063">
    <property type="entry name" value="USP8_dimer"/>
</dbReference>
<dbReference type="PANTHER" id="PTHR12947:SF20">
    <property type="match status" value="1"/>
</dbReference>
<dbReference type="PANTHER" id="PTHR12947">
    <property type="entry name" value="AMSH-LIKE PROTEASE"/>
    <property type="match status" value="1"/>
</dbReference>
<dbReference type="Pfam" id="PF08969">
    <property type="entry name" value="USP8_dimer"/>
    <property type="match status" value="1"/>
</dbReference>
<protein>
    <recommendedName>
        <fullName>Regulator of free ubiquitin chains 1</fullName>
    </recommendedName>
</protein>
<name>RFU1_VANPO</name>